<comment type="function">
    <text evidence="1">Component of the biogenesis of lysosome-related organelles complex-1 (BLOC-1), a complex that is involved in endosomal cargo sorting.</text>
</comment>
<comment type="subunit">
    <text evidence="1">Component of the biogenesis of lysosome-related organelles complex-1 (BLOC-1) composed of at least BLI1, BLS1, CNL1, KXD1, SNN1 and VAB2.</text>
</comment>
<comment type="subcellular location">
    <subcellularLocation>
        <location evidence="1">Cytoplasm</location>
    </subcellularLocation>
    <text evidence="1">Punctate pattern.</text>
</comment>
<comment type="similarity">
    <text evidence="4">Belongs to the BLOC1S4 family.</text>
</comment>
<keyword id="KW-0175">Coiled coil</keyword>
<keyword id="KW-0963">Cytoplasm</keyword>
<keyword id="KW-0813">Transport</keyword>
<proteinExistence type="inferred from homology"/>
<protein>
    <recommendedName>
        <fullName>Biogenesis of lysosome-related organelles complex 1 subunit CNL1</fullName>
        <shortName>BLOC-1 subunit CNL1</shortName>
    </recommendedName>
    <alternativeName>
        <fullName>CNO-like protein 1</fullName>
    </alternativeName>
</protein>
<gene>
    <name type="primary">CLN1</name>
    <name type="ORF">VL3_1060</name>
</gene>
<dbReference type="EMBL" id="AEJS01000022">
    <property type="protein sequence ID" value="EGA87346.1"/>
    <property type="molecule type" value="Genomic_DNA"/>
</dbReference>
<dbReference type="SMR" id="E7QDA1"/>
<dbReference type="HOGENOM" id="CLU_141728_1_0_1"/>
<dbReference type="OrthoDB" id="5424991at2759"/>
<dbReference type="GO" id="GO:0031083">
    <property type="term" value="C:BLOC-1 complex"/>
    <property type="evidence" value="ECO:0007669"/>
    <property type="project" value="InterPro"/>
</dbReference>
<dbReference type="GO" id="GO:0005737">
    <property type="term" value="C:cytoplasm"/>
    <property type="evidence" value="ECO:0007669"/>
    <property type="project" value="UniProtKB-SubCell"/>
</dbReference>
<dbReference type="GO" id="GO:0007032">
    <property type="term" value="P:endosome organization"/>
    <property type="evidence" value="ECO:0007669"/>
    <property type="project" value="TreeGrafter"/>
</dbReference>
<dbReference type="CDD" id="cd24144">
    <property type="entry name" value="BLOC1_CNL1"/>
    <property type="match status" value="1"/>
</dbReference>
<dbReference type="InterPro" id="IPR034455">
    <property type="entry name" value="CNL1"/>
</dbReference>
<dbReference type="PANTHER" id="PTHR39145">
    <property type="entry name" value="BIOGENESIS OF LYSOSOME-RELATED ORGANELLES COMPLEX 1 SUBUNIT CNL1"/>
    <property type="match status" value="1"/>
</dbReference>
<dbReference type="PANTHER" id="PTHR39145:SF1">
    <property type="entry name" value="BIOGENESIS OF LYSOSOME-RELATED ORGANELLES COMPLEX 1 SUBUNIT CNL1"/>
    <property type="match status" value="1"/>
</dbReference>
<name>BL1S4_YEASZ</name>
<feature type="chain" id="PRO_0000410654" description="Biogenesis of lysosome-related organelles complex 1 subunit CNL1">
    <location>
        <begin position="1"/>
        <end position="122"/>
    </location>
</feature>
<feature type="region of interest" description="Disordered" evidence="3">
    <location>
        <begin position="1"/>
        <end position="21"/>
    </location>
</feature>
<feature type="coiled-coil region" evidence="2">
    <location>
        <begin position="63"/>
        <end position="95"/>
    </location>
</feature>
<feature type="compositionally biased region" description="Basic and acidic residues" evidence="3">
    <location>
        <begin position="1"/>
        <end position="10"/>
    </location>
</feature>
<reference key="1">
    <citation type="journal article" date="2011" name="PLoS Genet.">
        <title>Whole-genome comparison reveals novel genetic elements that characterize the genome of industrial strains of Saccharomyces cerevisiae.</title>
        <authorList>
            <person name="Borneman A.R."/>
            <person name="Desany B.A."/>
            <person name="Riches D."/>
            <person name="Affourtit J.P."/>
            <person name="Forgan A.H."/>
            <person name="Pretorius I.S."/>
            <person name="Egholm M."/>
            <person name="Chambers P.J."/>
        </authorList>
    </citation>
    <scope>NUCLEOTIDE SEQUENCE [LARGE SCALE GENOMIC DNA]</scope>
    <source>
        <strain>Zymaflore VL3</strain>
    </source>
</reference>
<sequence length="122" mass="13939">MQDNSSHSRESASAGDDPLGIDKLTVDYDYLLYKIRDYVQSIQLDTTELCKKQNEVMVNGIIENTIDKNIAKFKELLEKCDTLENHYEMLNQLAIITDTFKERIAEAVNNYNSLKKGASKSK</sequence>
<accession>E7QDA1</accession>
<organism>
    <name type="scientific">Saccharomyces cerevisiae (strain Zymaflore VL3)</name>
    <name type="common">Baker's yeast</name>
    <dbReference type="NCBI Taxonomy" id="764100"/>
    <lineage>
        <taxon>Eukaryota</taxon>
        <taxon>Fungi</taxon>
        <taxon>Dikarya</taxon>
        <taxon>Ascomycota</taxon>
        <taxon>Saccharomycotina</taxon>
        <taxon>Saccharomycetes</taxon>
        <taxon>Saccharomycetales</taxon>
        <taxon>Saccharomycetaceae</taxon>
        <taxon>Saccharomyces</taxon>
    </lineage>
</organism>
<evidence type="ECO:0000250" key="1"/>
<evidence type="ECO:0000255" key="2"/>
<evidence type="ECO:0000256" key="3">
    <source>
        <dbReference type="SAM" id="MobiDB-lite"/>
    </source>
</evidence>
<evidence type="ECO:0000305" key="4"/>